<comment type="function">
    <text evidence="1">Iron-sulfur subunit of the cytochrome bc1 complex, an essential component of the respiratory electron transport chain required for ATP synthesis. The bc1 complex catalyzes the oxidation of menaquinol and the reduction of cytochrome c in the respiratory chain. The bc1 complex operates through a Q-cycle mechanism that couples electron transfer to generation of the proton gradient that drives ATP synthesis.</text>
</comment>
<comment type="cofactor">
    <cofactor evidence="3">
        <name>[2Fe-2S] cluster</name>
        <dbReference type="ChEBI" id="CHEBI:190135"/>
    </cofactor>
    <text evidence="3">Binds 1 [2Fe-2S] cluster per subunit.</text>
</comment>
<comment type="subunit">
    <text evidence="1">The cytochrome bc1 complex is composed of a cytochrome b (QcrB), the Rieske iron-sulfur protein (QcrA) and a diheme cytochrome c (QcrC) subunit. The bc1 complex forms a supercomplex with cytochrome c oxidase (cytochrome aa3).</text>
</comment>
<comment type="subcellular location">
    <subcellularLocation>
        <location evidence="2">Cell membrane</location>
        <topology evidence="2">Multi-pass membrane protein</topology>
    </subcellularLocation>
</comment>
<comment type="similarity">
    <text evidence="4">Belongs to the Rieske iron-sulfur protein family.</text>
</comment>
<gene>
    <name type="primary">qcrA</name>
    <name type="ordered locus">DIP1625</name>
</gene>
<organism>
    <name type="scientific">Corynebacterium diphtheriae (strain ATCC 700971 / NCTC 13129 / Biotype gravis)</name>
    <dbReference type="NCBI Taxonomy" id="257309"/>
    <lineage>
        <taxon>Bacteria</taxon>
        <taxon>Bacillati</taxon>
        <taxon>Actinomycetota</taxon>
        <taxon>Actinomycetes</taxon>
        <taxon>Mycobacteriales</taxon>
        <taxon>Corynebacteriaceae</taxon>
        <taxon>Corynebacterium</taxon>
    </lineage>
</organism>
<proteinExistence type="inferred from homology"/>
<feature type="chain" id="PRO_0000127788" description="Cytochrome bc1 complex Rieske iron-sulfur subunit">
    <location>
        <begin position="1"/>
        <end position="406"/>
    </location>
</feature>
<feature type="transmembrane region" description="Helical" evidence="2">
    <location>
        <begin position="56"/>
        <end position="76"/>
    </location>
</feature>
<feature type="transmembrane region" description="Helical" evidence="2">
    <location>
        <begin position="98"/>
        <end position="118"/>
    </location>
</feature>
<feature type="transmembrane region" description="Helical" evidence="2">
    <location>
        <begin position="166"/>
        <end position="186"/>
    </location>
</feature>
<feature type="domain" description="Rieske" evidence="3">
    <location>
        <begin position="291"/>
        <end position="388"/>
    </location>
</feature>
<feature type="binding site" evidence="3">
    <location>
        <position position="331"/>
    </location>
    <ligand>
        <name>[2Fe-2S] cluster</name>
        <dbReference type="ChEBI" id="CHEBI:190135"/>
    </ligand>
</feature>
<feature type="binding site" evidence="3">
    <location>
        <position position="333"/>
    </location>
    <ligand>
        <name>[2Fe-2S] cluster</name>
        <dbReference type="ChEBI" id="CHEBI:190135"/>
    </ligand>
</feature>
<feature type="binding site" evidence="3">
    <location>
        <position position="350"/>
    </location>
    <ligand>
        <name>[2Fe-2S] cluster</name>
        <dbReference type="ChEBI" id="CHEBI:190135"/>
    </ligand>
</feature>
<feature type="binding site" evidence="3">
    <location>
        <position position="353"/>
    </location>
    <ligand>
        <name>[2Fe-2S] cluster</name>
        <dbReference type="ChEBI" id="CHEBI:190135"/>
    </ligand>
</feature>
<feature type="disulfide bond" evidence="3">
    <location>
        <begin position="336"/>
        <end position="352"/>
    </location>
</feature>
<name>QCRA_CORDI</name>
<protein>
    <recommendedName>
        <fullName>Cytochrome bc1 complex Rieske iron-sulfur subunit</fullName>
    </recommendedName>
    <alternativeName>
        <fullName>Cytochrome bc1 reductase complex subunit QcrA</fullName>
    </alternativeName>
    <alternativeName>
        <fullName>Menaquinol--cytochrome c reductase iron-sulfur subunit</fullName>
    </alternativeName>
    <alternativeName>
        <fullName>Rieske iron-sulfur protein</fullName>
    </alternativeName>
</protein>
<dbReference type="EMBL" id="BX248358">
    <property type="protein sequence ID" value="CAE50150.1"/>
    <property type="molecule type" value="Genomic_DNA"/>
</dbReference>
<dbReference type="RefSeq" id="WP_010935205.1">
    <property type="nucleotide sequence ID" value="NC_002935.2"/>
</dbReference>
<dbReference type="SMR" id="Q6NGA2"/>
<dbReference type="STRING" id="257309.DIP1625"/>
<dbReference type="KEGG" id="cdi:DIP1625"/>
<dbReference type="HOGENOM" id="CLU_050668_0_0_11"/>
<dbReference type="Proteomes" id="UP000002198">
    <property type="component" value="Chromosome"/>
</dbReference>
<dbReference type="GO" id="GO:0005886">
    <property type="term" value="C:plasma membrane"/>
    <property type="evidence" value="ECO:0007669"/>
    <property type="project" value="UniProtKB-SubCell"/>
</dbReference>
<dbReference type="GO" id="GO:0051537">
    <property type="term" value="F:2 iron, 2 sulfur cluster binding"/>
    <property type="evidence" value="ECO:0007669"/>
    <property type="project" value="UniProtKB-KW"/>
</dbReference>
<dbReference type="GO" id="GO:0046872">
    <property type="term" value="F:metal ion binding"/>
    <property type="evidence" value="ECO:0007669"/>
    <property type="project" value="UniProtKB-KW"/>
</dbReference>
<dbReference type="GO" id="GO:0004497">
    <property type="term" value="F:monooxygenase activity"/>
    <property type="evidence" value="ECO:0007669"/>
    <property type="project" value="UniProtKB-ARBA"/>
</dbReference>
<dbReference type="GO" id="GO:0016705">
    <property type="term" value="F:oxidoreductase activity, acting on paired donors, with incorporation or reduction of molecular oxygen"/>
    <property type="evidence" value="ECO:0007669"/>
    <property type="project" value="UniProtKB-ARBA"/>
</dbReference>
<dbReference type="CDD" id="cd03467">
    <property type="entry name" value="Rieske"/>
    <property type="match status" value="1"/>
</dbReference>
<dbReference type="Gene3D" id="2.102.10.10">
    <property type="entry name" value="Rieske [2Fe-2S] iron-sulphur domain"/>
    <property type="match status" value="1"/>
</dbReference>
<dbReference type="InterPro" id="IPR045603">
    <property type="entry name" value="QcrA_N"/>
</dbReference>
<dbReference type="InterPro" id="IPR017941">
    <property type="entry name" value="Rieske_2Fe-2S"/>
</dbReference>
<dbReference type="InterPro" id="IPR036922">
    <property type="entry name" value="Rieske_2Fe-2S_sf"/>
</dbReference>
<dbReference type="InterPro" id="IPR014349">
    <property type="entry name" value="Rieske_Fe-S_prot"/>
</dbReference>
<dbReference type="PANTHER" id="PTHR10134">
    <property type="entry name" value="CYTOCHROME B-C1 COMPLEX SUBUNIT RIESKE, MITOCHONDRIAL"/>
    <property type="match status" value="1"/>
</dbReference>
<dbReference type="Pfam" id="PF19297">
    <property type="entry name" value="QcrA_N"/>
    <property type="match status" value="1"/>
</dbReference>
<dbReference type="Pfam" id="PF00355">
    <property type="entry name" value="Rieske"/>
    <property type="match status" value="1"/>
</dbReference>
<dbReference type="SUPFAM" id="SSF50022">
    <property type="entry name" value="ISP domain"/>
    <property type="match status" value="1"/>
</dbReference>
<dbReference type="PROSITE" id="PS51296">
    <property type="entry name" value="RIESKE"/>
    <property type="match status" value="1"/>
</dbReference>
<sequence length="406" mass="44957">MSNNPEMNYTSKELDAMSNEELARLGTELDGVTVAYRKERFPVEGDPASKRASRTVGIWFGIGIVSALAFLAVYLFMPWEYKGLGEDGLWIYTFYTPLLGLTSGLAILSLGIGVIFYIKKIIPSEISVQRRHDGPSEEIDRRTITALLNDSWETSTLGRRKVLKSMLGIGGVLAGLTIIAPLGGMVKNPWKKGELGIQGDGTLWTSGWTLHEKGVKLYLGRDTGVTAEKHETSVGTHYSTQGVSRLIRMRPEDLAAAAMETVFPLPAEFVNDGDKYDASADVYEEQMHSIHGPRNAVMLIRLRNSDANKVIEREGQEDFHYGDYYAYSKICTHIGCPTSLYEAQTNRILCPCHQSQFDALHYGKPVFGPAARALPQLPITVDEEGYLVAAGNFIEPVGPAFWERRS</sequence>
<evidence type="ECO:0000250" key="1">
    <source>
        <dbReference type="UniProtKB" id="Q79VE8"/>
    </source>
</evidence>
<evidence type="ECO:0000255" key="2"/>
<evidence type="ECO:0000255" key="3">
    <source>
        <dbReference type="PROSITE-ProRule" id="PRU00628"/>
    </source>
</evidence>
<evidence type="ECO:0000305" key="4"/>
<keyword id="KW-0001">2Fe-2S</keyword>
<keyword id="KW-1003">Cell membrane</keyword>
<keyword id="KW-1015">Disulfide bond</keyword>
<keyword id="KW-0249">Electron transport</keyword>
<keyword id="KW-0408">Iron</keyword>
<keyword id="KW-0411">Iron-sulfur</keyword>
<keyword id="KW-0472">Membrane</keyword>
<keyword id="KW-0479">Metal-binding</keyword>
<keyword id="KW-0560">Oxidoreductase</keyword>
<keyword id="KW-1185">Reference proteome</keyword>
<keyword id="KW-0679">Respiratory chain</keyword>
<keyword id="KW-0812">Transmembrane</keyword>
<keyword id="KW-1133">Transmembrane helix</keyword>
<keyword id="KW-0813">Transport</keyword>
<reference key="1">
    <citation type="journal article" date="2003" name="Nucleic Acids Res.">
        <title>The complete genome sequence and analysis of Corynebacterium diphtheriae NCTC13129.</title>
        <authorList>
            <person name="Cerdeno-Tarraga A.-M."/>
            <person name="Efstratiou A."/>
            <person name="Dover L.G."/>
            <person name="Holden M.T.G."/>
            <person name="Pallen M.J."/>
            <person name="Bentley S.D."/>
            <person name="Besra G.S."/>
            <person name="Churcher C.M."/>
            <person name="James K.D."/>
            <person name="De Zoysa A."/>
            <person name="Chillingworth T."/>
            <person name="Cronin A."/>
            <person name="Dowd L."/>
            <person name="Feltwell T."/>
            <person name="Hamlin N."/>
            <person name="Holroyd S."/>
            <person name="Jagels K."/>
            <person name="Moule S."/>
            <person name="Quail M.A."/>
            <person name="Rabbinowitsch E."/>
            <person name="Rutherford K.M."/>
            <person name="Thomson N.R."/>
            <person name="Unwin L."/>
            <person name="Whitehead S."/>
            <person name="Barrell B.G."/>
            <person name="Parkhill J."/>
        </authorList>
    </citation>
    <scope>NUCLEOTIDE SEQUENCE [LARGE SCALE GENOMIC DNA]</scope>
    <source>
        <strain>ATCC 700971 / NCTC 13129 / Biotype gravis</strain>
    </source>
</reference>
<accession>Q6NGA2</accession>